<dbReference type="PIR" id="A01409">
    <property type="entry name" value="UOGM2"/>
</dbReference>
<dbReference type="PIR" id="S42765">
    <property type="entry name" value="S42765"/>
</dbReference>
<dbReference type="GO" id="GO:0005576">
    <property type="term" value="C:extracellular region"/>
    <property type="evidence" value="ECO:0007669"/>
    <property type="project" value="UniProtKB-SubCell"/>
</dbReference>
<dbReference type="GO" id="GO:0005179">
    <property type="term" value="F:hormone activity"/>
    <property type="evidence" value="ECO:0007669"/>
    <property type="project" value="UniProtKB-KW"/>
</dbReference>
<dbReference type="GO" id="GO:0097746">
    <property type="term" value="P:blood vessel diameter maintenance"/>
    <property type="evidence" value="ECO:0007669"/>
    <property type="project" value="InterPro"/>
</dbReference>
<dbReference type="GO" id="GO:0008217">
    <property type="term" value="P:regulation of blood pressure"/>
    <property type="evidence" value="ECO:0007669"/>
    <property type="project" value="InterPro"/>
</dbReference>
<dbReference type="InterPro" id="IPR001483">
    <property type="entry name" value="Urotensin_II"/>
</dbReference>
<dbReference type="Pfam" id="PF02083">
    <property type="entry name" value="Urotensin_II"/>
    <property type="match status" value="1"/>
</dbReference>
<dbReference type="PROSITE" id="PS00984">
    <property type="entry name" value="UROTENSIN_II"/>
    <property type="match status" value="1"/>
</dbReference>
<organism>
    <name type="scientific">Gillichthys mirabilis</name>
    <name type="common">Long-jawed mudsucker</name>
    <dbReference type="NCBI Taxonomy" id="8222"/>
    <lineage>
        <taxon>Eukaryota</taxon>
        <taxon>Metazoa</taxon>
        <taxon>Chordata</taxon>
        <taxon>Craniata</taxon>
        <taxon>Vertebrata</taxon>
        <taxon>Euteleostomi</taxon>
        <taxon>Actinopterygii</taxon>
        <taxon>Neopterygii</taxon>
        <taxon>Teleostei</taxon>
        <taxon>Neoteleostei</taxon>
        <taxon>Acanthomorphata</taxon>
        <taxon>Gobiaria</taxon>
        <taxon>Gobiiformes</taxon>
        <taxon>Gobioidei</taxon>
        <taxon>Gobiidae</taxon>
        <taxon>Gobionellinae</taxon>
        <taxon>Gillichthys</taxon>
    </lineage>
</organism>
<protein>
    <recommendedName>
        <fullName>Urotensin-2</fullName>
    </recommendedName>
    <alternativeName>
        <fullName>Urotensin II</fullName>
        <shortName>U-II</shortName>
        <shortName>UII</shortName>
    </alternativeName>
</protein>
<comment type="function">
    <text>Urotensin is found in the teleost caudal neurosecretory system. It has a suggested role in osmoregulation and as a corticotropin-releasing factor.</text>
</comment>
<comment type="subcellular location">
    <subcellularLocation>
        <location>Secreted</location>
    </subcellularLocation>
</comment>
<comment type="similarity">
    <text evidence="2">Belongs to the urotensin-2 family.</text>
</comment>
<keyword id="KW-0903">Direct protein sequencing</keyword>
<keyword id="KW-1015">Disulfide bond</keyword>
<keyword id="KW-0372">Hormone</keyword>
<keyword id="KW-0964">Secreted</keyword>
<feature type="peptide" id="PRO_0000044568" description="Urotensin-2">
    <location>
        <begin position="1"/>
        <end position="12"/>
    </location>
</feature>
<feature type="disulfide bond" evidence="1">
    <location>
        <begin position="6"/>
        <end position="11"/>
    </location>
</feature>
<proteinExistence type="evidence at protein level"/>
<sequence>AGTADCFWKYCV</sequence>
<evidence type="ECO:0000269" key="1">
    <source>
    </source>
</evidence>
<evidence type="ECO:0000305" key="2"/>
<name>UTS2_GILMI</name>
<reference key="1">
    <citation type="journal article" date="1980" name="Proc. Natl. Acad. Sci. U.S.A.">
        <title>Urotensin II: a somatostatin-like peptide in the caudal neurosecretory system of fishes.</title>
        <authorList>
            <person name="Pearson D."/>
            <person name="Shively J.E."/>
            <person name="Clark B.R."/>
            <person name="Geschwind I.I."/>
            <person name="Barkley M."/>
            <person name="Nishioka R."/>
            <person name="Bern H.A."/>
        </authorList>
    </citation>
    <scope>PROTEIN SEQUENCE</scope>
</reference>
<accession>P01147</accession>